<evidence type="ECO:0000250" key="1"/>
<evidence type="ECO:0000250" key="2">
    <source>
        <dbReference type="UniProtKB" id="P47755"/>
    </source>
</evidence>
<evidence type="ECO:0000305" key="3"/>
<accession>Q4R5G1</accession>
<organism>
    <name type="scientific">Macaca fascicularis</name>
    <name type="common">Crab-eating macaque</name>
    <name type="synonym">Cynomolgus monkey</name>
    <dbReference type="NCBI Taxonomy" id="9541"/>
    <lineage>
        <taxon>Eukaryota</taxon>
        <taxon>Metazoa</taxon>
        <taxon>Chordata</taxon>
        <taxon>Craniata</taxon>
        <taxon>Vertebrata</taxon>
        <taxon>Euteleostomi</taxon>
        <taxon>Mammalia</taxon>
        <taxon>Eutheria</taxon>
        <taxon>Euarchontoglires</taxon>
        <taxon>Primates</taxon>
        <taxon>Haplorrhini</taxon>
        <taxon>Catarrhini</taxon>
        <taxon>Cercopithecidae</taxon>
        <taxon>Cercopithecinae</taxon>
        <taxon>Macaca</taxon>
    </lineage>
</organism>
<keyword id="KW-0007">Acetylation</keyword>
<keyword id="KW-0117">Actin capping</keyword>
<keyword id="KW-0009">Actin-binding</keyword>
<keyword id="KW-0597">Phosphoprotein</keyword>
<keyword id="KW-1185">Reference proteome</keyword>
<gene>
    <name type="primary">CAPZA2</name>
    <name type="ORF">QnpA-12590</name>
</gene>
<feature type="initiator methionine" description="Removed" evidence="2">
    <location>
        <position position="1"/>
    </location>
</feature>
<feature type="chain" id="PRO_0000226316" description="F-actin-capping protein subunit alpha-2">
    <location>
        <begin position="2"/>
        <end position="286"/>
    </location>
</feature>
<feature type="modified residue" description="N-acetylalanine" evidence="2">
    <location>
        <position position="2"/>
    </location>
</feature>
<feature type="modified residue" description="Phosphoserine" evidence="2">
    <location>
        <position position="9"/>
    </location>
</feature>
<sequence>MADLEEQLSDEEKVRIAAKFIIHAPPGEFNEVFNDVRLLLNNDNLLREGAAHAFAQYNLDQFTPVKIEGYEDQVLITEHGDLGNGKFLDPKNRICFKFDHLRKEATDPRPCEVENAVESWRTSVETALRAYVKEHYPNGVCTVYGKKIDGQQTIIACIESHQFQAKNFWNGRWRSEWKFTITPSTTQVVGILKIQVHYYEDGNVQLVSHKDIQDSLAVSNEVQTAKEFIKIVEAAENEYQTAISENYQTMSDTTFKALRRQLPVTRTKIDWNKILSYKIGKEMQNA</sequence>
<comment type="function">
    <text evidence="1">F-actin-capping proteins bind in a Ca(2+)-independent manner to the fast growing ends of actin filaments (barbed end) thereby blocking the exchange of subunits at these ends. Unlike other capping proteins (such as gelsolin and severin), these proteins do not sever actin filaments (By similarity).</text>
</comment>
<comment type="subunit">
    <text evidence="1">Component of the F-actin capping complex, composed of a heterodimer of an alpha and a beta subunit. Component of the WASH complex, composed of F-actin-capping protein subunit alpha (CAPZA1, CAPZA2 or CAPZA3), F-actin-capping protein subunit beta (CAPZB), WASHC1, WASHC2, WASHC3, WASHC4 and WASHC5. Interacts with RCSD1/CAPZIP (By similarity).</text>
</comment>
<comment type="similarity">
    <text evidence="3">Belongs to the F-actin-capping protein alpha subunit family.</text>
</comment>
<proteinExistence type="evidence at transcript level"/>
<protein>
    <recommendedName>
        <fullName>F-actin-capping protein subunit alpha-2</fullName>
    </recommendedName>
    <alternativeName>
        <fullName>CapZ alpha-2</fullName>
    </alternativeName>
</protein>
<name>CAZA2_MACFA</name>
<dbReference type="EMBL" id="AB169582">
    <property type="protein sequence ID" value="BAE01664.1"/>
    <property type="molecule type" value="mRNA"/>
</dbReference>
<dbReference type="RefSeq" id="NP_001272258.1">
    <property type="nucleotide sequence ID" value="NM_001285329.1"/>
</dbReference>
<dbReference type="SMR" id="Q4R5G1"/>
<dbReference type="STRING" id="9541.ENSMFAP00000041018"/>
<dbReference type="eggNOG" id="KOG0836">
    <property type="taxonomic scope" value="Eukaryota"/>
</dbReference>
<dbReference type="Proteomes" id="UP000233100">
    <property type="component" value="Unplaced"/>
</dbReference>
<dbReference type="GO" id="GO:0030863">
    <property type="term" value="C:cortical cytoskeleton"/>
    <property type="evidence" value="ECO:0007669"/>
    <property type="project" value="TreeGrafter"/>
</dbReference>
<dbReference type="GO" id="GO:0008290">
    <property type="term" value="C:F-actin capping protein complex"/>
    <property type="evidence" value="ECO:0007669"/>
    <property type="project" value="InterPro"/>
</dbReference>
<dbReference type="GO" id="GO:0051015">
    <property type="term" value="F:actin filament binding"/>
    <property type="evidence" value="ECO:0007669"/>
    <property type="project" value="TreeGrafter"/>
</dbReference>
<dbReference type="GO" id="GO:0030036">
    <property type="term" value="P:actin cytoskeleton organization"/>
    <property type="evidence" value="ECO:0007669"/>
    <property type="project" value="TreeGrafter"/>
</dbReference>
<dbReference type="GO" id="GO:0051016">
    <property type="term" value="P:barbed-end actin filament capping"/>
    <property type="evidence" value="ECO:0007669"/>
    <property type="project" value="InterPro"/>
</dbReference>
<dbReference type="FunFam" id="3.30.1140.60:FF:000001">
    <property type="entry name" value="F-actin-capping protein subunit alpha"/>
    <property type="match status" value="1"/>
</dbReference>
<dbReference type="FunFam" id="3.90.1150.210:FF:000002">
    <property type="entry name" value="F-actin-capping protein subunit alpha"/>
    <property type="match status" value="1"/>
</dbReference>
<dbReference type="Gene3D" id="3.30.1140.60">
    <property type="entry name" value="F-actin capping protein, alpha subunit"/>
    <property type="match status" value="1"/>
</dbReference>
<dbReference type="Gene3D" id="3.90.1150.210">
    <property type="entry name" value="F-actin capping protein, beta subunit"/>
    <property type="match status" value="1"/>
</dbReference>
<dbReference type="InterPro" id="IPR002189">
    <property type="entry name" value="CapZ_alpha"/>
</dbReference>
<dbReference type="InterPro" id="IPR037282">
    <property type="entry name" value="CapZ_alpha/beta"/>
</dbReference>
<dbReference type="InterPro" id="IPR042276">
    <property type="entry name" value="CapZ_alpha/beta_2"/>
</dbReference>
<dbReference type="InterPro" id="IPR042489">
    <property type="entry name" value="CapZ_alpha_1"/>
</dbReference>
<dbReference type="InterPro" id="IPR017865">
    <property type="entry name" value="F-actin_cap_asu_CS"/>
</dbReference>
<dbReference type="PANTHER" id="PTHR10653">
    <property type="entry name" value="F-ACTIN-CAPPING PROTEIN SUBUNIT ALPHA"/>
    <property type="match status" value="1"/>
</dbReference>
<dbReference type="PANTHER" id="PTHR10653:SF2">
    <property type="entry name" value="F-ACTIN-CAPPING PROTEIN SUBUNIT ALPHA-2"/>
    <property type="match status" value="1"/>
</dbReference>
<dbReference type="Pfam" id="PF01267">
    <property type="entry name" value="F-actin_cap_A"/>
    <property type="match status" value="1"/>
</dbReference>
<dbReference type="PRINTS" id="PR00191">
    <property type="entry name" value="FACTINCAPA"/>
</dbReference>
<dbReference type="SUPFAM" id="SSF90096">
    <property type="entry name" value="Subunits of heterodimeric actin filament capping protein Capz"/>
    <property type="match status" value="1"/>
</dbReference>
<dbReference type="PROSITE" id="PS00748">
    <property type="entry name" value="F_ACTIN_CAPPING_A_1"/>
    <property type="match status" value="1"/>
</dbReference>
<dbReference type="PROSITE" id="PS00749">
    <property type="entry name" value="F_ACTIN_CAPPING_A_2"/>
    <property type="match status" value="1"/>
</dbReference>
<reference key="1">
    <citation type="submission" date="2005-06" db="EMBL/GenBank/DDBJ databases">
        <title>DNA sequences of macaque genes expressed in brain or testis and its evolutionary implications.</title>
        <authorList>
            <consortium name="International consortium for macaque cDNA sequencing and analysis"/>
        </authorList>
    </citation>
    <scope>NUCLEOTIDE SEQUENCE [LARGE SCALE MRNA]</scope>
    <source>
        <tissue>Parietal cortex</tissue>
    </source>
</reference>